<comment type="function">
    <text evidence="2">Catalyzes the introduction of a C-5 double bond in the B ring of ergosterol. May contribute to the regulation of ergosterol biosynthesis.</text>
</comment>
<comment type="catalytic activity">
    <reaction evidence="2">
        <text>a Delta(7)-sterol + 2 Fe(II)-[cytochrome b5] + O2 + 2 H(+) = a Delta(5),Delta(7)-sterol + 2 Fe(III)-[cytochrome b5] + 2 H2O</text>
        <dbReference type="Rhea" id="RHEA:54320"/>
        <dbReference type="Rhea" id="RHEA-COMP:10438"/>
        <dbReference type="Rhea" id="RHEA-COMP:10439"/>
        <dbReference type="ChEBI" id="CHEBI:15377"/>
        <dbReference type="ChEBI" id="CHEBI:15378"/>
        <dbReference type="ChEBI" id="CHEBI:15379"/>
        <dbReference type="ChEBI" id="CHEBI:29033"/>
        <dbReference type="ChEBI" id="CHEBI:29034"/>
        <dbReference type="ChEBI" id="CHEBI:138130"/>
        <dbReference type="ChEBI" id="CHEBI:138131"/>
        <dbReference type="EC" id="1.14.19.20"/>
    </reaction>
</comment>
<comment type="cofactor">
    <cofactor evidence="1">
        <name>Fe cation</name>
        <dbReference type="ChEBI" id="CHEBI:24875"/>
    </cofactor>
</comment>
<comment type="pathway">
    <text>Steroid metabolism; ergosterol biosynthesis; ergosterol from zymosterol: step 3/5.</text>
</comment>
<comment type="subcellular location">
    <subcellularLocation>
        <location evidence="4">Endoplasmic reticulum membrane</location>
        <topology evidence="4">Multi-pass membrane protein</topology>
    </subcellularLocation>
</comment>
<comment type="domain">
    <text>The histidine box domains may contain the active site and/or be involved in metal ion binding.</text>
</comment>
<comment type="similarity">
    <text evidence="4">Belongs to the sterol desaturase family.</text>
</comment>
<protein>
    <recommendedName>
        <fullName>Delta(7)-sterol 5(6)-desaturase</fullName>
        <ecNumber>1.14.19.20</ecNumber>
    </recommendedName>
    <alternativeName>
        <fullName>C-5 sterol desaturase</fullName>
    </alternativeName>
    <alternativeName>
        <fullName>Ergosterol Delta(5,6) desaturase</fullName>
    </alternativeName>
    <alternativeName>
        <fullName>Sterol-C5-desaturase</fullName>
    </alternativeName>
</protein>
<gene>
    <name type="primary">ERG3</name>
    <name type="ordered locus">CAGL0F01793g</name>
</gene>
<proteinExistence type="inferred from homology"/>
<keyword id="KW-0256">Endoplasmic reticulum</keyword>
<keyword id="KW-0408">Iron</keyword>
<keyword id="KW-0444">Lipid biosynthesis</keyword>
<keyword id="KW-0443">Lipid metabolism</keyword>
<keyword id="KW-0472">Membrane</keyword>
<keyword id="KW-0560">Oxidoreductase</keyword>
<keyword id="KW-1185">Reference proteome</keyword>
<keyword id="KW-0752">Steroid biosynthesis</keyword>
<keyword id="KW-0753">Steroid metabolism</keyword>
<keyword id="KW-0756">Sterol biosynthesis</keyword>
<keyword id="KW-1207">Sterol metabolism</keyword>
<keyword id="KW-0812">Transmembrane</keyword>
<keyword id="KW-1133">Transmembrane helix</keyword>
<evidence type="ECO:0000250" key="1"/>
<evidence type="ECO:0000250" key="2">
    <source>
        <dbReference type="UniProtKB" id="P32353"/>
    </source>
</evidence>
<evidence type="ECO:0000255" key="3"/>
<evidence type="ECO:0000305" key="4"/>
<name>ERG3_CANGA</name>
<organism>
    <name type="scientific">Candida glabrata (strain ATCC 2001 / BCRC 20586 / JCM 3761 / NBRC 0622 / NRRL Y-65 / CBS 138)</name>
    <name type="common">Yeast</name>
    <name type="synonym">Nakaseomyces glabratus</name>
    <dbReference type="NCBI Taxonomy" id="284593"/>
    <lineage>
        <taxon>Eukaryota</taxon>
        <taxon>Fungi</taxon>
        <taxon>Dikarya</taxon>
        <taxon>Ascomycota</taxon>
        <taxon>Saccharomycotina</taxon>
        <taxon>Saccharomycetes</taxon>
        <taxon>Saccharomycetales</taxon>
        <taxon>Saccharomycetaceae</taxon>
        <taxon>Nakaseomyces</taxon>
    </lineage>
</organism>
<dbReference type="EC" id="1.14.19.20"/>
<dbReference type="EMBL" id="L40390">
    <property type="protein sequence ID" value="AAB02330.1"/>
    <property type="molecule type" value="Genomic_DNA"/>
</dbReference>
<dbReference type="EMBL" id="CR380952">
    <property type="protein sequence ID" value="CAG58974.1"/>
    <property type="molecule type" value="Genomic_DNA"/>
</dbReference>
<dbReference type="RefSeq" id="XP_446050.1">
    <property type="nucleotide sequence ID" value="XM_446050.1"/>
</dbReference>
<dbReference type="FunCoup" id="P50860">
    <property type="interactions" value="204"/>
</dbReference>
<dbReference type="STRING" id="284593.P50860"/>
<dbReference type="EnsemblFungi" id="CAGL0F01793g-T">
    <property type="protein sequence ID" value="CAGL0F01793g-T-p1"/>
    <property type="gene ID" value="CAGL0F01793g"/>
</dbReference>
<dbReference type="GeneID" id="2887958"/>
<dbReference type="KEGG" id="cgr:2887958"/>
<dbReference type="CGD" id="CAL0129591">
    <property type="gene designation" value="ERG3"/>
</dbReference>
<dbReference type="VEuPathDB" id="FungiDB:B1J91_F01793g"/>
<dbReference type="VEuPathDB" id="FungiDB:CAGL0F01793g"/>
<dbReference type="eggNOG" id="KOG0872">
    <property type="taxonomic scope" value="Eukaryota"/>
</dbReference>
<dbReference type="HOGENOM" id="CLU_047036_3_0_1"/>
<dbReference type="InParanoid" id="P50860"/>
<dbReference type="OMA" id="GPGLWYN"/>
<dbReference type="UniPathway" id="UPA00768">
    <property type="reaction ID" value="UER00762"/>
</dbReference>
<dbReference type="Proteomes" id="UP000002428">
    <property type="component" value="Chromosome F"/>
</dbReference>
<dbReference type="GO" id="GO:0005788">
    <property type="term" value="C:endoplasmic reticulum lumen"/>
    <property type="evidence" value="ECO:0007669"/>
    <property type="project" value="EnsemblFungi"/>
</dbReference>
<dbReference type="GO" id="GO:0005789">
    <property type="term" value="C:endoplasmic reticulum membrane"/>
    <property type="evidence" value="ECO:0007669"/>
    <property type="project" value="UniProtKB-SubCell"/>
</dbReference>
<dbReference type="GO" id="GO:0000248">
    <property type="term" value="F:C-5 sterol desaturase activity"/>
    <property type="evidence" value="ECO:0007669"/>
    <property type="project" value="EnsemblFungi"/>
</dbReference>
<dbReference type="GO" id="GO:0050046">
    <property type="term" value="F:delta7-sterol 5(6)-desaturase activity"/>
    <property type="evidence" value="ECO:0007669"/>
    <property type="project" value="UniProtKB-EC"/>
</dbReference>
<dbReference type="GO" id="GO:0005506">
    <property type="term" value="F:iron ion binding"/>
    <property type="evidence" value="ECO:0007669"/>
    <property type="project" value="InterPro"/>
</dbReference>
<dbReference type="GO" id="GO:0071466">
    <property type="term" value="P:cellular response to xenobiotic stimulus"/>
    <property type="evidence" value="ECO:0000315"/>
    <property type="project" value="CGD"/>
</dbReference>
<dbReference type="GO" id="GO:0006696">
    <property type="term" value="P:ergosterol biosynthetic process"/>
    <property type="evidence" value="ECO:0000315"/>
    <property type="project" value="CGD"/>
</dbReference>
<dbReference type="InterPro" id="IPR006694">
    <property type="entry name" value="Fatty_acid_hydroxylase"/>
</dbReference>
<dbReference type="InterPro" id="IPR050307">
    <property type="entry name" value="Sterol_Desaturase_Related"/>
</dbReference>
<dbReference type="PANTHER" id="PTHR11863">
    <property type="entry name" value="STEROL DESATURASE"/>
    <property type="match status" value="1"/>
</dbReference>
<dbReference type="Pfam" id="PF04116">
    <property type="entry name" value="FA_hydroxylase"/>
    <property type="match status" value="1"/>
</dbReference>
<reference key="1">
    <citation type="journal article" date="1995" name="Antimicrob. Agents Chemother.">
        <title>Deletion of the Candida glabrata ERG3 and ERG11 genes: effect on cell viability, cell growth, sterol composition, and antifungal susceptibility.</title>
        <authorList>
            <person name="Geber A."/>
            <person name="Hitchcock C.A."/>
            <person name="Swartz J.E."/>
            <person name="Pullen F.S."/>
            <person name="Marsden K.E."/>
            <person name="Kwon-Chung K.J."/>
            <person name="Bennett J.E."/>
        </authorList>
    </citation>
    <scope>NUCLEOTIDE SEQUENCE [GENOMIC DNA]</scope>
    <source>
        <strain>2001-L5</strain>
    </source>
</reference>
<reference key="2">
    <citation type="journal article" date="2004" name="Nature">
        <title>Genome evolution in yeasts.</title>
        <authorList>
            <person name="Dujon B."/>
            <person name="Sherman D."/>
            <person name="Fischer G."/>
            <person name="Durrens P."/>
            <person name="Casaregola S."/>
            <person name="Lafontaine I."/>
            <person name="de Montigny J."/>
            <person name="Marck C."/>
            <person name="Neuveglise C."/>
            <person name="Talla E."/>
            <person name="Goffard N."/>
            <person name="Frangeul L."/>
            <person name="Aigle M."/>
            <person name="Anthouard V."/>
            <person name="Babour A."/>
            <person name="Barbe V."/>
            <person name="Barnay S."/>
            <person name="Blanchin S."/>
            <person name="Beckerich J.-M."/>
            <person name="Beyne E."/>
            <person name="Bleykasten C."/>
            <person name="Boisrame A."/>
            <person name="Boyer J."/>
            <person name="Cattolico L."/>
            <person name="Confanioleri F."/>
            <person name="de Daruvar A."/>
            <person name="Despons L."/>
            <person name="Fabre E."/>
            <person name="Fairhead C."/>
            <person name="Ferry-Dumazet H."/>
            <person name="Groppi A."/>
            <person name="Hantraye F."/>
            <person name="Hennequin C."/>
            <person name="Jauniaux N."/>
            <person name="Joyet P."/>
            <person name="Kachouri R."/>
            <person name="Kerrest A."/>
            <person name="Koszul R."/>
            <person name="Lemaire M."/>
            <person name="Lesur I."/>
            <person name="Ma L."/>
            <person name="Muller H."/>
            <person name="Nicaud J.-M."/>
            <person name="Nikolski M."/>
            <person name="Oztas S."/>
            <person name="Ozier-Kalogeropoulos O."/>
            <person name="Pellenz S."/>
            <person name="Potier S."/>
            <person name="Richard G.-F."/>
            <person name="Straub M.-L."/>
            <person name="Suleau A."/>
            <person name="Swennen D."/>
            <person name="Tekaia F."/>
            <person name="Wesolowski-Louvel M."/>
            <person name="Westhof E."/>
            <person name="Wirth B."/>
            <person name="Zeniou-Meyer M."/>
            <person name="Zivanovic Y."/>
            <person name="Bolotin-Fukuhara M."/>
            <person name="Thierry A."/>
            <person name="Bouchier C."/>
            <person name="Caudron B."/>
            <person name="Scarpelli C."/>
            <person name="Gaillardin C."/>
            <person name="Weissenbach J."/>
            <person name="Wincker P."/>
            <person name="Souciet J.-L."/>
        </authorList>
    </citation>
    <scope>NUCLEOTIDE SEQUENCE [LARGE SCALE GENOMIC DNA]</scope>
    <source>
        <strain>ATCC 2001 / BCRC 20586 / JCM 3761 / NBRC 0622 / NRRL Y-65 / CBS 138</strain>
    </source>
</reference>
<feature type="chain" id="PRO_0000117022" description="Delta(7)-sterol 5(6)-desaturase">
    <location>
        <begin position="1"/>
        <end position="364"/>
    </location>
</feature>
<feature type="transmembrane region" description="Helical" evidence="3">
    <location>
        <begin position="94"/>
        <end position="114"/>
    </location>
</feature>
<feature type="transmembrane region" description="Helical" evidence="3">
    <location>
        <begin position="142"/>
        <end position="162"/>
    </location>
</feature>
<feature type="transmembrane region" description="Helical" evidence="3">
    <location>
        <begin position="181"/>
        <end position="201"/>
    </location>
</feature>
<feature type="transmembrane region" description="Helical" evidence="3">
    <location>
        <begin position="249"/>
        <end position="269"/>
    </location>
</feature>
<feature type="domain" description="Fatty acid hydroxylase" evidence="3">
    <location>
        <begin position="188"/>
        <end position="312"/>
    </location>
</feature>
<feature type="short sequence motif" description="Histidine box-1">
    <location>
        <begin position="201"/>
        <end position="205"/>
    </location>
</feature>
<feature type="short sequence motif" description="Histidine box-2">
    <location>
        <begin position="214"/>
        <end position="218"/>
    </location>
</feature>
<feature type="short sequence motif" description="Histidine box-3">
    <location>
        <begin position="289"/>
        <end position="293"/>
    </location>
</feature>
<accession>P50860</accession>
<sequence>MDLVLETLDHYIFDDVYAKIAPVELQRGIDDSLVNALSLNKIVSNSTLLHETLSITNSLKRVNKDVYGLTPFLFDFTEKTYASLLPRNNLIREFFSLWAVVTVFGLLLYLITASLSYVFVFDRTIFNHPKYLKNQMYLEIKLAVSAIPTMSLLTVPWFMLELNGYSKLYYDVDWEHHGLRKLLIEYATFIFFTDCGIYLAHRWLHWPRVYKALHKPHHKWLVCTPFASHAFHPVDGYFQSLSYHIYPMILPLHKISYLILFTFVNFWSVMIHDGQHMSNNPVVNGTACHTVHHLYFNYNYGQFTTLWDRLGGSYRRPEDSLFDPKLKMDKKVLEKQARETAAYIQEVEGDDTDRVYNTDKKKTN</sequence>